<protein>
    <recommendedName>
        <fullName evidence="1">Membrane-bound lytic murein transglycosylase C</fullName>
        <ecNumber evidence="1">4.2.2.n1</ecNumber>
    </recommendedName>
    <alternativeName>
        <fullName evidence="1">Murein lyase C</fullName>
    </alternativeName>
</protein>
<proteinExistence type="inferred from homology"/>
<name>MLTC_HAEIN</name>
<evidence type="ECO:0000255" key="1">
    <source>
        <dbReference type="HAMAP-Rule" id="MF_01616"/>
    </source>
</evidence>
<keyword id="KW-0998">Cell outer membrane</keyword>
<keyword id="KW-0961">Cell wall biogenesis/degradation</keyword>
<keyword id="KW-0449">Lipoprotein</keyword>
<keyword id="KW-0456">Lyase</keyword>
<keyword id="KW-0472">Membrane</keyword>
<keyword id="KW-0564">Palmitate</keyword>
<keyword id="KW-1185">Reference proteome</keyword>
<keyword id="KW-0732">Signal</keyword>
<reference key="1">
    <citation type="journal article" date="1995" name="Science">
        <title>Whole-genome random sequencing and assembly of Haemophilus influenzae Rd.</title>
        <authorList>
            <person name="Fleischmann R.D."/>
            <person name="Adams M.D."/>
            <person name="White O."/>
            <person name="Clayton R.A."/>
            <person name="Kirkness E.F."/>
            <person name="Kerlavage A.R."/>
            <person name="Bult C.J."/>
            <person name="Tomb J.-F."/>
            <person name="Dougherty B.A."/>
            <person name="Merrick J.M."/>
            <person name="McKenney K."/>
            <person name="Sutton G.G."/>
            <person name="FitzHugh W."/>
            <person name="Fields C.A."/>
            <person name="Gocayne J.D."/>
            <person name="Scott J.D."/>
            <person name="Shirley R."/>
            <person name="Liu L.-I."/>
            <person name="Glodek A."/>
            <person name="Kelley J.M."/>
            <person name="Weidman J.F."/>
            <person name="Phillips C.A."/>
            <person name="Spriggs T."/>
            <person name="Hedblom E."/>
            <person name="Cotton M.D."/>
            <person name="Utterback T.R."/>
            <person name="Hanna M.C."/>
            <person name="Nguyen D.T."/>
            <person name="Saudek D.M."/>
            <person name="Brandon R.C."/>
            <person name="Fine L.D."/>
            <person name="Fritchman J.L."/>
            <person name="Fuhrmann J.L."/>
            <person name="Geoghagen N.S.M."/>
            <person name="Gnehm C.L."/>
            <person name="McDonald L.A."/>
            <person name="Small K.V."/>
            <person name="Fraser C.M."/>
            <person name="Smith H.O."/>
            <person name="Venter J.C."/>
        </authorList>
    </citation>
    <scope>NUCLEOTIDE SEQUENCE [LARGE SCALE GENOMIC DNA]</scope>
    <source>
        <strain>ATCC 51907 / DSM 11121 / KW20 / Rd</strain>
    </source>
</reference>
<sequence length="357" mass="40207">MKKYLLLALLPFLYACSNSSNQGINYDEAFAKDTQGLDILTGQFSHNIDRIWGVNELLVASRKDYVKYTDSFYTRSHVSFDEGNIVIETQQDLNRLHNAIVHTLLMGADAKGIDLFASGDVPISSRPFLLGQVVDHQGQHIANQVIASNFATYLIQNKLQTRRLQNGHTVQFVSVPMIANHVEVRARKYLPLIRKAAQRYGIDESLILGIMQTESSFNPYAISYANAIGLMQVVPHTAGRDVFAMKGKGGQPSTRYLYDPANNIDAGVSYLWILQNQYLDGITNPTSKRFAMISAYNSGAGAVLRVFDNDKDTAIYKINQMYPEQVYRILTTVHPSSQARNYLLKVDKAQKKFRVRR</sequence>
<comment type="function">
    <text evidence="1">Murein-degrading enzyme. May play a role in recycling of muropeptides during cell elongation and/or cell division.</text>
</comment>
<comment type="catalytic activity">
    <reaction evidence="1">
        <text>Exolytic cleavage of the (1-&gt;4)-beta-glycosidic linkage between N-acetylmuramic acid (MurNAc) and N-acetylglucosamine (GlcNAc) residues in peptidoglycan, from either the reducing or the non-reducing ends of the peptidoglycan chains, with concomitant formation of a 1,6-anhydrobond in the MurNAc residue.</text>
        <dbReference type="EC" id="4.2.2.n1"/>
    </reaction>
</comment>
<comment type="subcellular location">
    <subcellularLocation>
        <location evidence="1">Cell outer membrane</location>
        <topology evidence="1">Lipid-anchor</topology>
    </subcellularLocation>
</comment>
<comment type="similarity">
    <text evidence="1">Belongs to the transglycosylase Slt family.</text>
</comment>
<organism>
    <name type="scientific">Haemophilus influenzae (strain ATCC 51907 / DSM 11121 / KW20 / Rd)</name>
    <dbReference type="NCBI Taxonomy" id="71421"/>
    <lineage>
        <taxon>Bacteria</taxon>
        <taxon>Pseudomonadati</taxon>
        <taxon>Pseudomonadota</taxon>
        <taxon>Gammaproteobacteria</taxon>
        <taxon>Pasteurellales</taxon>
        <taxon>Pasteurellaceae</taxon>
        <taxon>Haemophilus</taxon>
    </lineage>
</organism>
<feature type="signal peptide" evidence="1">
    <location>
        <begin position="1"/>
        <end position="15"/>
    </location>
</feature>
<feature type="chain" id="PRO_0000032790" description="Membrane-bound lytic murein transglycosylase C">
    <location>
        <begin position="16"/>
        <end position="357"/>
    </location>
</feature>
<feature type="lipid moiety-binding region" description="N-palmitoyl cysteine" evidence="1">
    <location>
        <position position="16"/>
    </location>
</feature>
<feature type="lipid moiety-binding region" description="S-diacylglycerol cysteine" evidence="1">
    <location>
        <position position="16"/>
    </location>
</feature>
<accession>P44049</accession>
<gene>
    <name evidence="1" type="primary">mltC</name>
    <name type="ordered locus">HI_0761</name>
</gene>
<dbReference type="EC" id="4.2.2.n1" evidence="1"/>
<dbReference type="EMBL" id="L42023">
    <property type="protein sequence ID" value="AAC22420.1"/>
    <property type="molecule type" value="Genomic_DNA"/>
</dbReference>
<dbReference type="PIR" id="D64013">
    <property type="entry name" value="D64013"/>
</dbReference>
<dbReference type="RefSeq" id="NP_438920.1">
    <property type="nucleotide sequence ID" value="NC_000907.1"/>
</dbReference>
<dbReference type="SMR" id="P44049"/>
<dbReference type="STRING" id="71421.HI_0761"/>
<dbReference type="CAZy" id="GH23">
    <property type="family name" value="Glycoside Hydrolase Family 23"/>
</dbReference>
<dbReference type="EnsemblBacteria" id="AAC22420">
    <property type="protein sequence ID" value="AAC22420"/>
    <property type="gene ID" value="HI_0761"/>
</dbReference>
<dbReference type="KEGG" id="hin:HI_0761"/>
<dbReference type="PATRIC" id="fig|71421.8.peg.800"/>
<dbReference type="eggNOG" id="COG0741">
    <property type="taxonomic scope" value="Bacteria"/>
</dbReference>
<dbReference type="HOGENOM" id="CLU_044583_0_0_6"/>
<dbReference type="OrthoDB" id="5620293at2"/>
<dbReference type="PhylomeDB" id="P44049"/>
<dbReference type="BioCyc" id="HINF71421:G1GJ1-799-MONOMER"/>
<dbReference type="Proteomes" id="UP000000579">
    <property type="component" value="Chromosome"/>
</dbReference>
<dbReference type="GO" id="GO:0009279">
    <property type="term" value="C:cell outer membrane"/>
    <property type="evidence" value="ECO:0007669"/>
    <property type="project" value="UniProtKB-SubCell"/>
</dbReference>
<dbReference type="GO" id="GO:0016798">
    <property type="term" value="F:hydrolase activity, acting on glycosyl bonds"/>
    <property type="evidence" value="ECO:0007669"/>
    <property type="project" value="InterPro"/>
</dbReference>
<dbReference type="GO" id="GO:0008933">
    <property type="term" value="F:peptidoglycan lytic transglycosylase activity"/>
    <property type="evidence" value="ECO:0007669"/>
    <property type="project" value="UniProtKB-UniRule"/>
</dbReference>
<dbReference type="GO" id="GO:0016998">
    <property type="term" value="P:cell wall macromolecule catabolic process"/>
    <property type="evidence" value="ECO:0007669"/>
    <property type="project" value="UniProtKB-UniRule"/>
</dbReference>
<dbReference type="GO" id="GO:0071555">
    <property type="term" value="P:cell wall organization"/>
    <property type="evidence" value="ECO:0007669"/>
    <property type="project" value="UniProtKB-KW"/>
</dbReference>
<dbReference type="GO" id="GO:0000270">
    <property type="term" value="P:peptidoglycan metabolic process"/>
    <property type="evidence" value="ECO:0007669"/>
    <property type="project" value="InterPro"/>
</dbReference>
<dbReference type="CDD" id="cd16893">
    <property type="entry name" value="LT_MltC_MltE"/>
    <property type="match status" value="1"/>
</dbReference>
<dbReference type="Gene3D" id="1.10.530.10">
    <property type="match status" value="1"/>
</dbReference>
<dbReference type="HAMAP" id="MF_01616">
    <property type="entry name" value="MltC"/>
    <property type="match status" value="1"/>
</dbReference>
<dbReference type="InterPro" id="IPR023346">
    <property type="entry name" value="Lysozyme-like_dom_sf"/>
</dbReference>
<dbReference type="InterPro" id="IPR023664">
    <property type="entry name" value="Murein_transglycosylaseC"/>
</dbReference>
<dbReference type="InterPro" id="IPR024570">
    <property type="entry name" value="Murein_transglycosylaseC_N"/>
</dbReference>
<dbReference type="InterPro" id="IPR000189">
    <property type="entry name" value="Transglyc_AS"/>
</dbReference>
<dbReference type="InterPro" id="IPR008258">
    <property type="entry name" value="Transglycosylase_SLT_dom_1"/>
</dbReference>
<dbReference type="NCBIfam" id="NF008670">
    <property type="entry name" value="PRK11671.1"/>
    <property type="match status" value="1"/>
</dbReference>
<dbReference type="PANTHER" id="PTHR37423:SF2">
    <property type="entry name" value="MEMBRANE-BOUND LYTIC MUREIN TRANSGLYCOSYLASE C"/>
    <property type="match status" value="1"/>
</dbReference>
<dbReference type="PANTHER" id="PTHR37423">
    <property type="entry name" value="SOLUBLE LYTIC MUREIN TRANSGLYCOSYLASE-RELATED"/>
    <property type="match status" value="1"/>
</dbReference>
<dbReference type="Pfam" id="PF11873">
    <property type="entry name" value="Mltc_N"/>
    <property type="match status" value="1"/>
</dbReference>
<dbReference type="Pfam" id="PF01464">
    <property type="entry name" value="SLT"/>
    <property type="match status" value="1"/>
</dbReference>
<dbReference type="SUPFAM" id="SSF53955">
    <property type="entry name" value="Lysozyme-like"/>
    <property type="match status" value="1"/>
</dbReference>
<dbReference type="PROSITE" id="PS51257">
    <property type="entry name" value="PROKAR_LIPOPROTEIN"/>
    <property type="match status" value="1"/>
</dbReference>
<dbReference type="PROSITE" id="PS00922">
    <property type="entry name" value="TRANSGLYCOSYLASE"/>
    <property type="match status" value="1"/>
</dbReference>